<organism>
    <name type="scientific">Albidiferax ferrireducens (strain ATCC BAA-621 / DSM 15236 / T118)</name>
    <name type="common">Rhodoferax ferrireducens</name>
    <dbReference type="NCBI Taxonomy" id="338969"/>
    <lineage>
        <taxon>Bacteria</taxon>
        <taxon>Pseudomonadati</taxon>
        <taxon>Pseudomonadota</taxon>
        <taxon>Betaproteobacteria</taxon>
        <taxon>Burkholderiales</taxon>
        <taxon>Comamonadaceae</taxon>
        <taxon>Rhodoferax</taxon>
    </lineage>
</organism>
<reference key="1">
    <citation type="submission" date="2006-02" db="EMBL/GenBank/DDBJ databases">
        <title>Complete sequence of chromosome of Rhodoferax ferrireducens DSM 15236.</title>
        <authorList>
            <person name="Copeland A."/>
            <person name="Lucas S."/>
            <person name="Lapidus A."/>
            <person name="Barry K."/>
            <person name="Detter J.C."/>
            <person name="Glavina del Rio T."/>
            <person name="Hammon N."/>
            <person name="Israni S."/>
            <person name="Pitluck S."/>
            <person name="Brettin T."/>
            <person name="Bruce D."/>
            <person name="Han C."/>
            <person name="Tapia R."/>
            <person name="Gilna P."/>
            <person name="Kiss H."/>
            <person name="Schmutz J."/>
            <person name="Larimer F."/>
            <person name="Land M."/>
            <person name="Kyrpides N."/>
            <person name="Ivanova N."/>
            <person name="Richardson P."/>
        </authorList>
    </citation>
    <scope>NUCLEOTIDE SEQUENCE [LARGE SCALE GENOMIC DNA]</scope>
    <source>
        <strain>ATCC BAA-621 / DSM 15236 / T118</strain>
    </source>
</reference>
<proteinExistence type="inferred from homology"/>
<dbReference type="EC" id="5.2.1.8" evidence="1"/>
<dbReference type="EMBL" id="CP000267">
    <property type="protein sequence ID" value="ABD67858.1"/>
    <property type="molecule type" value="Genomic_DNA"/>
</dbReference>
<dbReference type="RefSeq" id="WP_011462431.1">
    <property type="nucleotide sequence ID" value="NC_007908.1"/>
</dbReference>
<dbReference type="SMR" id="Q223E5"/>
<dbReference type="STRING" id="338969.Rfer_0097"/>
<dbReference type="KEGG" id="rfr:Rfer_0097"/>
<dbReference type="eggNOG" id="COG0760">
    <property type="taxonomic scope" value="Bacteria"/>
</dbReference>
<dbReference type="HOGENOM" id="CLU_034646_11_0_4"/>
<dbReference type="OrthoDB" id="14196at2"/>
<dbReference type="Proteomes" id="UP000008332">
    <property type="component" value="Chromosome"/>
</dbReference>
<dbReference type="GO" id="GO:0030288">
    <property type="term" value="C:outer membrane-bounded periplasmic space"/>
    <property type="evidence" value="ECO:0007669"/>
    <property type="project" value="InterPro"/>
</dbReference>
<dbReference type="GO" id="GO:0042277">
    <property type="term" value="F:peptide binding"/>
    <property type="evidence" value="ECO:0007669"/>
    <property type="project" value="InterPro"/>
</dbReference>
<dbReference type="GO" id="GO:0003755">
    <property type="term" value="F:peptidyl-prolyl cis-trans isomerase activity"/>
    <property type="evidence" value="ECO:0007669"/>
    <property type="project" value="UniProtKB-UniRule"/>
</dbReference>
<dbReference type="GO" id="GO:0051082">
    <property type="term" value="F:unfolded protein binding"/>
    <property type="evidence" value="ECO:0007669"/>
    <property type="project" value="UniProtKB-UniRule"/>
</dbReference>
<dbReference type="GO" id="GO:0043165">
    <property type="term" value="P:Gram-negative-bacterium-type cell outer membrane assembly"/>
    <property type="evidence" value="ECO:0007669"/>
    <property type="project" value="InterPro"/>
</dbReference>
<dbReference type="GO" id="GO:0006457">
    <property type="term" value="P:protein folding"/>
    <property type="evidence" value="ECO:0007669"/>
    <property type="project" value="UniProtKB-UniRule"/>
</dbReference>
<dbReference type="GO" id="GO:0050821">
    <property type="term" value="P:protein stabilization"/>
    <property type="evidence" value="ECO:0007669"/>
    <property type="project" value="InterPro"/>
</dbReference>
<dbReference type="Gene3D" id="3.10.50.40">
    <property type="match status" value="2"/>
</dbReference>
<dbReference type="Gene3D" id="1.10.4030.10">
    <property type="entry name" value="Porin chaperone SurA, peptide-binding domain"/>
    <property type="match status" value="1"/>
</dbReference>
<dbReference type="HAMAP" id="MF_01183">
    <property type="entry name" value="Chaperone_SurA"/>
    <property type="match status" value="1"/>
</dbReference>
<dbReference type="InterPro" id="IPR050280">
    <property type="entry name" value="OMP_Chaperone_SurA"/>
</dbReference>
<dbReference type="InterPro" id="IPR046357">
    <property type="entry name" value="PPIase_dom_sf"/>
</dbReference>
<dbReference type="InterPro" id="IPR000297">
    <property type="entry name" value="PPIase_PpiC"/>
</dbReference>
<dbReference type="InterPro" id="IPR023058">
    <property type="entry name" value="PPIase_PpiC_CS"/>
</dbReference>
<dbReference type="InterPro" id="IPR023034">
    <property type="entry name" value="PPIase_SurA"/>
</dbReference>
<dbReference type="InterPro" id="IPR015391">
    <property type="entry name" value="SurA_N"/>
</dbReference>
<dbReference type="InterPro" id="IPR027304">
    <property type="entry name" value="Trigger_fact/SurA_dom_sf"/>
</dbReference>
<dbReference type="PANTHER" id="PTHR47637">
    <property type="entry name" value="CHAPERONE SURA"/>
    <property type="match status" value="1"/>
</dbReference>
<dbReference type="PANTHER" id="PTHR47637:SF1">
    <property type="entry name" value="CHAPERONE SURA"/>
    <property type="match status" value="1"/>
</dbReference>
<dbReference type="Pfam" id="PF00639">
    <property type="entry name" value="Rotamase"/>
    <property type="match status" value="1"/>
</dbReference>
<dbReference type="Pfam" id="PF13616">
    <property type="entry name" value="Rotamase_3"/>
    <property type="match status" value="1"/>
</dbReference>
<dbReference type="Pfam" id="PF09312">
    <property type="entry name" value="SurA_N"/>
    <property type="match status" value="1"/>
</dbReference>
<dbReference type="SUPFAM" id="SSF54534">
    <property type="entry name" value="FKBP-like"/>
    <property type="match status" value="2"/>
</dbReference>
<dbReference type="SUPFAM" id="SSF109998">
    <property type="entry name" value="Triger factor/SurA peptide-binding domain-like"/>
    <property type="match status" value="1"/>
</dbReference>
<dbReference type="PROSITE" id="PS01096">
    <property type="entry name" value="PPIC_PPIASE_1"/>
    <property type="match status" value="1"/>
</dbReference>
<dbReference type="PROSITE" id="PS50198">
    <property type="entry name" value="PPIC_PPIASE_2"/>
    <property type="match status" value="2"/>
</dbReference>
<comment type="function">
    <text evidence="1">Chaperone involved in the correct folding and assembly of outer membrane proteins. Recognizes specific patterns of aromatic residues and the orientation of their side chains, which are found more frequently in integral outer membrane proteins. May act in both early periplasmic and late outer membrane-associated steps of protein maturation.</text>
</comment>
<comment type="catalytic activity">
    <reaction evidence="1">
        <text>[protein]-peptidylproline (omega=180) = [protein]-peptidylproline (omega=0)</text>
        <dbReference type="Rhea" id="RHEA:16237"/>
        <dbReference type="Rhea" id="RHEA-COMP:10747"/>
        <dbReference type="Rhea" id="RHEA-COMP:10748"/>
        <dbReference type="ChEBI" id="CHEBI:83833"/>
        <dbReference type="ChEBI" id="CHEBI:83834"/>
        <dbReference type="EC" id="5.2.1.8"/>
    </reaction>
</comment>
<comment type="subcellular location">
    <subcellularLocation>
        <location evidence="1">Periplasm</location>
    </subcellularLocation>
    <text evidence="1">Is capable of associating with the outer membrane.</text>
</comment>
<comment type="domain">
    <text evidence="1">The PPIase activity resides only in the second parvulin domain. The N-terminal region and the C-terminal tail are necessary and sufficient for the chaperone activity of SurA. The PPIase activity is dispensable for SurA to function as a chaperone. The N-terminal region and the C-terminal tail are also required for porin recognition.</text>
</comment>
<feature type="signal peptide" evidence="1">
    <location>
        <begin position="1"/>
        <end position="23"/>
    </location>
</feature>
<feature type="chain" id="PRO_5000110063" description="Chaperone SurA">
    <location>
        <begin position="24"/>
        <end position="459"/>
    </location>
</feature>
<feature type="domain" description="PpiC 1" evidence="1">
    <location>
        <begin position="197"/>
        <end position="301"/>
    </location>
</feature>
<feature type="domain" description="PpiC 2" evidence="1">
    <location>
        <begin position="312"/>
        <end position="411"/>
    </location>
</feature>
<keyword id="KW-0143">Chaperone</keyword>
<keyword id="KW-0413">Isomerase</keyword>
<keyword id="KW-0574">Periplasm</keyword>
<keyword id="KW-1185">Reference proteome</keyword>
<keyword id="KW-0677">Repeat</keyword>
<keyword id="KW-0697">Rotamase</keyword>
<keyword id="KW-0732">Signal</keyword>
<accession>Q223E5</accession>
<sequence length="459" mass="50003">MNHRLVALSVASLALLAPLTVPAQGLRPSSATVGAGVLAPARVPAATGLAADYIVAVVNSEPITNNEVRAALQRVLQQLAQQGNPQVDSKTLVRQVLERLINEKAQLQLARESGIAADEAAIDQAEQNIARQNQLTVAELRRRLTQEGGVPGQFRNQLRDQILLTRLREREVEPRARVSELEIDQFLREQQSSTPAVQQINLAQVLVSVPDTATPVQVTALQARAQRALARARAGEDFVTLVREFSDASDKASLANGGELGLRTADRYPPLFLEATHNLAVGEISALVRSGAGFHILKVLEKKSAALPAMTVTQSRARHILLRVSPQLTESAARDKLNEFKKRVAAGQADFAALARDHSQDGSAAQGGDLGWANPGMFVPEFEAVMNSLTPGQISEPLVSRFGVHLIQLMERRQATLSPQEQREAVRAMLHEKKLDEAYISWAQDVRGRAYVELREPPQ</sequence>
<name>SURA_ALBFT</name>
<protein>
    <recommendedName>
        <fullName evidence="1">Chaperone SurA</fullName>
    </recommendedName>
    <alternativeName>
        <fullName evidence="1">Peptidyl-prolyl cis-trans isomerase SurA</fullName>
        <shortName evidence="1">PPIase SurA</shortName>
        <ecNumber evidence="1">5.2.1.8</ecNumber>
    </alternativeName>
    <alternativeName>
        <fullName evidence="1">Rotamase SurA</fullName>
    </alternativeName>
</protein>
<gene>
    <name evidence="1" type="primary">surA</name>
    <name type="ordered locus">Rfer_0097</name>
</gene>
<evidence type="ECO:0000255" key="1">
    <source>
        <dbReference type="HAMAP-Rule" id="MF_01183"/>
    </source>
</evidence>